<feature type="chain" id="PRO_0000179537" description="ATP-dependent Clp protease proteolytic subunit">
    <location>
        <begin position="1"/>
        <end position="210"/>
    </location>
</feature>
<feature type="active site" description="Nucleophile" evidence="1">
    <location>
        <position position="107"/>
    </location>
</feature>
<feature type="active site" evidence="1">
    <location>
        <position position="132"/>
    </location>
</feature>
<dbReference type="EC" id="3.4.21.92" evidence="1"/>
<dbReference type="EMBL" id="AE016825">
    <property type="protein sequence ID" value="AAQ60228.1"/>
    <property type="molecule type" value="Genomic_DNA"/>
</dbReference>
<dbReference type="RefSeq" id="WP_011136105.1">
    <property type="nucleotide sequence ID" value="NC_005085.1"/>
</dbReference>
<dbReference type="SMR" id="Q7NUY9"/>
<dbReference type="STRING" id="243365.CV_2558"/>
<dbReference type="MEROPS" id="S14.001"/>
<dbReference type="GeneID" id="66368308"/>
<dbReference type="KEGG" id="cvi:CV_2558"/>
<dbReference type="eggNOG" id="COG0740">
    <property type="taxonomic scope" value="Bacteria"/>
</dbReference>
<dbReference type="HOGENOM" id="CLU_058707_3_2_4"/>
<dbReference type="OrthoDB" id="9802800at2"/>
<dbReference type="Proteomes" id="UP000001424">
    <property type="component" value="Chromosome"/>
</dbReference>
<dbReference type="GO" id="GO:0005737">
    <property type="term" value="C:cytoplasm"/>
    <property type="evidence" value="ECO:0007669"/>
    <property type="project" value="UniProtKB-SubCell"/>
</dbReference>
<dbReference type="GO" id="GO:0009368">
    <property type="term" value="C:endopeptidase Clp complex"/>
    <property type="evidence" value="ECO:0007669"/>
    <property type="project" value="TreeGrafter"/>
</dbReference>
<dbReference type="GO" id="GO:0004176">
    <property type="term" value="F:ATP-dependent peptidase activity"/>
    <property type="evidence" value="ECO:0007669"/>
    <property type="project" value="InterPro"/>
</dbReference>
<dbReference type="GO" id="GO:0051117">
    <property type="term" value="F:ATPase binding"/>
    <property type="evidence" value="ECO:0007669"/>
    <property type="project" value="TreeGrafter"/>
</dbReference>
<dbReference type="GO" id="GO:0004252">
    <property type="term" value="F:serine-type endopeptidase activity"/>
    <property type="evidence" value="ECO:0007669"/>
    <property type="project" value="UniProtKB-UniRule"/>
</dbReference>
<dbReference type="GO" id="GO:0006515">
    <property type="term" value="P:protein quality control for misfolded or incompletely synthesized proteins"/>
    <property type="evidence" value="ECO:0007669"/>
    <property type="project" value="TreeGrafter"/>
</dbReference>
<dbReference type="CDD" id="cd07017">
    <property type="entry name" value="S14_ClpP_2"/>
    <property type="match status" value="1"/>
</dbReference>
<dbReference type="FunFam" id="3.90.226.10:FF:000001">
    <property type="entry name" value="ATP-dependent Clp protease proteolytic subunit"/>
    <property type="match status" value="1"/>
</dbReference>
<dbReference type="Gene3D" id="3.90.226.10">
    <property type="entry name" value="2-enoyl-CoA Hydratase, Chain A, domain 1"/>
    <property type="match status" value="1"/>
</dbReference>
<dbReference type="HAMAP" id="MF_00444">
    <property type="entry name" value="ClpP"/>
    <property type="match status" value="1"/>
</dbReference>
<dbReference type="InterPro" id="IPR001907">
    <property type="entry name" value="ClpP"/>
</dbReference>
<dbReference type="InterPro" id="IPR029045">
    <property type="entry name" value="ClpP/crotonase-like_dom_sf"/>
</dbReference>
<dbReference type="InterPro" id="IPR023562">
    <property type="entry name" value="ClpP/TepA"/>
</dbReference>
<dbReference type="InterPro" id="IPR033135">
    <property type="entry name" value="ClpP_His_AS"/>
</dbReference>
<dbReference type="InterPro" id="IPR018215">
    <property type="entry name" value="ClpP_Ser_AS"/>
</dbReference>
<dbReference type="NCBIfam" id="TIGR00493">
    <property type="entry name" value="clpP"/>
    <property type="match status" value="1"/>
</dbReference>
<dbReference type="NCBIfam" id="NF001368">
    <property type="entry name" value="PRK00277.1"/>
    <property type="match status" value="1"/>
</dbReference>
<dbReference type="NCBIfam" id="NF009205">
    <property type="entry name" value="PRK12553.1"/>
    <property type="match status" value="1"/>
</dbReference>
<dbReference type="PANTHER" id="PTHR10381">
    <property type="entry name" value="ATP-DEPENDENT CLP PROTEASE PROTEOLYTIC SUBUNIT"/>
    <property type="match status" value="1"/>
</dbReference>
<dbReference type="PANTHER" id="PTHR10381:SF70">
    <property type="entry name" value="ATP-DEPENDENT CLP PROTEASE PROTEOLYTIC SUBUNIT"/>
    <property type="match status" value="1"/>
</dbReference>
<dbReference type="Pfam" id="PF00574">
    <property type="entry name" value="CLP_protease"/>
    <property type="match status" value="1"/>
</dbReference>
<dbReference type="PRINTS" id="PR00127">
    <property type="entry name" value="CLPPROTEASEP"/>
</dbReference>
<dbReference type="SUPFAM" id="SSF52096">
    <property type="entry name" value="ClpP/crotonase"/>
    <property type="match status" value="1"/>
</dbReference>
<dbReference type="PROSITE" id="PS00382">
    <property type="entry name" value="CLP_PROTEASE_HIS"/>
    <property type="match status" value="1"/>
</dbReference>
<dbReference type="PROSITE" id="PS00381">
    <property type="entry name" value="CLP_PROTEASE_SER"/>
    <property type="match status" value="1"/>
</dbReference>
<name>CLPP_CHRVO</name>
<protein>
    <recommendedName>
        <fullName evidence="1">ATP-dependent Clp protease proteolytic subunit</fullName>
        <ecNumber evidence="1">3.4.21.92</ecNumber>
    </recommendedName>
    <alternativeName>
        <fullName evidence="1">Endopeptidase Clp</fullName>
    </alternativeName>
</protein>
<keyword id="KW-0963">Cytoplasm</keyword>
<keyword id="KW-0378">Hydrolase</keyword>
<keyword id="KW-0645">Protease</keyword>
<keyword id="KW-1185">Reference proteome</keyword>
<keyword id="KW-0720">Serine protease</keyword>
<comment type="function">
    <text evidence="1">Cleaves peptides in various proteins in a process that requires ATP hydrolysis. Has a chymotrypsin-like activity. Plays a major role in the degradation of misfolded proteins.</text>
</comment>
<comment type="catalytic activity">
    <reaction evidence="1">
        <text>Hydrolysis of proteins to small peptides in the presence of ATP and magnesium. alpha-casein is the usual test substrate. In the absence of ATP, only oligopeptides shorter than five residues are hydrolyzed (such as succinyl-Leu-Tyr-|-NHMec, and Leu-Tyr-Leu-|-Tyr-Trp, in which cleavage of the -Tyr-|-Leu- and -Tyr-|-Trp bonds also occurs).</text>
        <dbReference type="EC" id="3.4.21.92"/>
    </reaction>
</comment>
<comment type="subunit">
    <text evidence="1">Fourteen ClpP subunits assemble into 2 heptameric rings which stack back to back to give a disk-like structure with a central cavity, resembling the structure of eukaryotic proteasomes.</text>
</comment>
<comment type="subcellular location">
    <subcellularLocation>
        <location evidence="1">Cytoplasm</location>
    </subcellularLocation>
</comment>
<comment type="similarity">
    <text evidence="1">Belongs to the peptidase S14 family.</text>
</comment>
<sequence length="210" mass="23086">MKSMMEPQGLGLVPMVVEQSGRGERAYDIYSRLLKERIVFLVGPVTDESANLVVAQMLFLESENPDKDIHFYINSPGGSITAGMSIYDTMNFIKPDVSTLCIGQAASMGAFLLAAGTHGKRFALENSRVMIHQPLLYGGGLSGQVTDIEIHARELVKVKAKMNELLAKHSGQTLERVQSDTERDNFMSAEEARAYGMIDKVLSSRRDVTA</sequence>
<evidence type="ECO:0000255" key="1">
    <source>
        <dbReference type="HAMAP-Rule" id="MF_00444"/>
    </source>
</evidence>
<reference key="1">
    <citation type="journal article" date="2003" name="Proc. Natl. Acad. Sci. U.S.A.">
        <title>The complete genome sequence of Chromobacterium violaceum reveals remarkable and exploitable bacterial adaptability.</title>
        <authorList>
            <person name="Vasconcelos A.T.R."/>
            <person name="de Almeida D.F."/>
            <person name="Hungria M."/>
            <person name="Guimaraes C.T."/>
            <person name="Antonio R.V."/>
            <person name="Almeida F.C."/>
            <person name="de Almeida L.G.P."/>
            <person name="de Almeida R."/>
            <person name="Alves-Gomes J.A."/>
            <person name="Andrade E.M."/>
            <person name="Araripe J."/>
            <person name="de Araujo M.F.F."/>
            <person name="Astolfi-Filho S."/>
            <person name="Azevedo V."/>
            <person name="Baptista A.J."/>
            <person name="Bataus L.A.M."/>
            <person name="Batista J.S."/>
            <person name="Belo A."/>
            <person name="van den Berg C."/>
            <person name="Bogo M."/>
            <person name="Bonatto S."/>
            <person name="Bordignon J."/>
            <person name="Brigido M.M."/>
            <person name="Brito C.A."/>
            <person name="Brocchi M."/>
            <person name="Burity H.A."/>
            <person name="Camargo A.A."/>
            <person name="Cardoso D.D.P."/>
            <person name="Carneiro N.P."/>
            <person name="Carraro D.M."/>
            <person name="Carvalho C.M.B."/>
            <person name="Cascardo J.C.M."/>
            <person name="Cavada B.S."/>
            <person name="Chueire L.M.O."/>
            <person name="Creczynski-Pasa T.B."/>
            <person name="Cunha-Junior N.C."/>
            <person name="Fagundes N."/>
            <person name="Falcao C.L."/>
            <person name="Fantinatti F."/>
            <person name="Farias I.P."/>
            <person name="Felipe M.S.S."/>
            <person name="Ferrari L.P."/>
            <person name="Ferro J.A."/>
            <person name="Ferro M.I.T."/>
            <person name="Franco G.R."/>
            <person name="Freitas N.S.A."/>
            <person name="Furlan L.R."/>
            <person name="Gazzinelli R.T."/>
            <person name="Gomes E.A."/>
            <person name="Goncalves P.R."/>
            <person name="Grangeiro T.B."/>
            <person name="Grattapaglia D."/>
            <person name="Grisard E.C."/>
            <person name="Hanna E.S."/>
            <person name="Jardim S.N."/>
            <person name="Laurino J."/>
            <person name="Leoi L.C.T."/>
            <person name="Lima L.F.A."/>
            <person name="Loureiro M.F."/>
            <person name="Lyra M.C.C.P."/>
            <person name="Madeira H.M.F."/>
            <person name="Manfio G.P."/>
            <person name="Maranhao A.Q."/>
            <person name="Martins W.S."/>
            <person name="di Mauro S.M.Z."/>
            <person name="de Medeiros S.R.B."/>
            <person name="Meissner R.V."/>
            <person name="Moreira M.A.M."/>
            <person name="Nascimento F.F."/>
            <person name="Nicolas M.F."/>
            <person name="Oliveira J.G."/>
            <person name="Oliveira S.C."/>
            <person name="Paixao R.F.C."/>
            <person name="Parente J.A."/>
            <person name="Pedrosa F.O."/>
            <person name="Pena S.D.J."/>
            <person name="Pereira J.O."/>
            <person name="Pereira M."/>
            <person name="Pinto L.S.R.C."/>
            <person name="Pinto L.S."/>
            <person name="Porto J.I.R."/>
            <person name="Potrich D.P."/>
            <person name="Ramalho-Neto C.E."/>
            <person name="Reis A.M.M."/>
            <person name="Rigo L.U."/>
            <person name="Rondinelli E."/>
            <person name="Santos E.B.P."/>
            <person name="Santos F.R."/>
            <person name="Schneider M.P.C."/>
            <person name="Seuanez H.N."/>
            <person name="Silva A.M.R."/>
            <person name="da Silva A.L.C."/>
            <person name="Silva D.W."/>
            <person name="Silva R."/>
            <person name="Simoes I.C."/>
            <person name="Simon D."/>
            <person name="Soares C.M.A."/>
            <person name="Soares R.B.A."/>
            <person name="Souza E.M."/>
            <person name="Souza K.R.L."/>
            <person name="Souza R.C."/>
            <person name="Steffens M.B.R."/>
            <person name="Steindel M."/>
            <person name="Teixeira S.R."/>
            <person name="Urmenyi T."/>
            <person name="Vettore A."/>
            <person name="Wassem R."/>
            <person name="Zaha A."/>
            <person name="Simpson A.J.G."/>
        </authorList>
    </citation>
    <scope>NUCLEOTIDE SEQUENCE [LARGE SCALE GENOMIC DNA]</scope>
    <source>
        <strain>ATCC 12472 / DSM 30191 / JCM 1249 / CCUG 213 / NBRC 12614 / NCIMB 9131 / NCTC 9757 / MK</strain>
    </source>
</reference>
<gene>
    <name evidence="1" type="primary">clpP</name>
    <name type="ordered locus">CV_2558</name>
</gene>
<accession>Q7NUY9</accession>
<organism>
    <name type="scientific">Chromobacterium violaceum (strain ATCC 12472 / DSM 30191 / JCM 1249 / CCUG 213 / NBRC 12614 / NCIMB 9131 / NCTC 9757 / MK)</name>
    <dbReference type="NCBI Taxonomy" id="243365"/>
    <lineage>
        <taxon>Bacteria</taxon>
        <taxon>Pseudomonadati</taxon>
        <taxon>Pseudomonadota</taxon>
        <taxon>Betaproteobacteria</taxon>
        <taxon>Neisseriales</taxon>
        <taxon>Chromobacteriaceae</taxon>
        <taxon>Chromobacterium</taxon>
    </lineage>
</organism>
<proteinExistence type="inferred from homology"/>